<name>36012_ASFWA</name>
<feature type="chain" id="PRO_0000373280" description="Protein MGF 360-12L">
    <location>
        <begin position="1"/>
        <end position="350"/>
    </location>
</feature>
<feature type="repeat" description="ANK">
    <location>
        <begin position="57"/>
        <end position="89"/>
    </location>
</feature>
<comment type="function">
    <text evidence="1">Plays a role in virus cell tropism, and may be required for efficient virus replication in macrophages.</text>
</comment>
<comment type="similarity">
    <text evidence="2">Belongs to the asfivirus MGF 360 family.</text>
</comment>
<reference key="1">
    <citation type="submission" date="2003-03" db="EMBL/GenBank/DDBJ databases">
        <title>African swine fever virus genomes.</title>
        <authorList>
            <person name="Kutish G.F."/>
            <person name="Rock D.L."/>
        </authorList>
    </citation>
    <scope>NUCLEOTIDE SEQUENCE [LARGE SCALE GENOMIC DNA]</scope>
</reference>
<sequence length="350" mass="40820">MLPSLQSLTKKVLAGQCVPTNQHYLLKCYDLWWHDGPITFDHNLKLIKSAGIKEGLDLNTALVKAVRENNYNLIKLFAEWGANINYGLVSVNTEHTRDLCRELGAKETLNEEEILQIFIDLKFHKTSSNIILCHEVFSNNPILQKVNNIKMRIEIFWELRELIEKTDLLNNEFSLSALLLKYWYAIAIRYNLKEAIQYFYQKYTHLNTWRLTCALCFNNVFDLHEAYEKDKIHMDIEEMMRIACIKDHNLSTMYYCYVLGANINQAMLTSIQYYNIENMFFCMDLGADAFEEGTIALGEGYKLIKNILSLKIYSPATTPLPKSTDPEIIDHALKNYVSKNMMIFLTYDLR</sequence>
<protein>
    <recommendedName>
        <fullName>Protein MGF 360-12L</fullName>
    </recommendedName>
</protein>
<organism>
    <name type="scientific">African swine fever virus (isolate Warthog/Namibia/Wart80/1980)</name>
    <name type="common">ASFV</name>
    <dbReference type="NCBI Taxonomy" id="561444"/>
    <lineage>
        <taxon>Viruses</taxon>
        <taxon>Varidnaviria</taxon>
        <taxon>Bamfordvirae</taxon>
        <taxon>Nucleocytoviricota</taxon>
        <taxon>Pokkesviricetes</taxon>
        <taxon>Asfuvirales</taxon>
        <taxon>Asfarviridae</taxon>
        <taxon>Asfivirus</taxon>
        <taxon>African swine fever virus</taxon>
    </lineage>
</organism>
<dbReference type="EMBL" id="AY261366">
    <property type="status" value="NOT_ANNOTATED_CDS"/>
    <property type="molecule type" value="Genomic_DNA"/>
</dbReference>
<dbReference type="Proteomes" id="UP000000858">
    <property type="component" value="Segment"/>
</dbReference>
<dbReference type="GO" id="GO:0042330">
    <property type="term" value="P:taxis"/>
    <property type="evidence" value="ECO:0007669"/>
    <property type="project" value="InterPro"/>
</dbReference>
<dbReference type="InterPro" id="IPR002595">
    <property type="entry name" value="ASFV_MGF360"/>
</dbReference>
<dbReference type="Pfam" id="PF01671">
    <property type="entry name" value="ASFV_360"/>
    <property type="match status" value="1"/>
</dbReference>
<accession>P0C9P9</accession>
<keyword id="KW-0040">ANK repeat</keyword>
<organismHost>
    <name type="scientific">Ornithodoros</name>
    <name type="common">relapsing fever ticks</name>
    <dbReference type="NCBI Taxonomy" id="6937"/>
</organismHost>
<organismHost>
    <name type="scientific">Phacochoerus aethiopicus</name>
    <name type="common">Warthog</name>
    <dbReference type="NCBI Taxonomy" id="85517"/>
</organismHost>
<organismHost>
    <name type="scientific">Phacochoerus africanus</name>
    <name type="common">Warthog</name>
    <dbReference type="NCBI Taxonomy" id="41426"/>
</organismHost>
<organismHost>
    <name type="scientific">Potamochoerus larvatus</name>
    <name type="common">Bushpig</name>
    <dbReference type="NCBI Taxonomy" id="273792"/>
</organismHost>
<organismHost>
    <name type="scientific">Sus scrofa</name>
    <name type="common">Pig</name>
    <dbReference type="NCBI Taxonomy" id="9823"/>
</organismHost>
<gene>
    <name type="ordered locus">War-033</name>
</gene>
<evidence type="ECO:0000250" key="1"/>
<evidence type="ECO:0000305" key="2"/>
<proteinExistence type="inferred from homology"/>